<name>AGO4_MOUSE</name>
<sequence>MEALGPGPPASLFQPPRRPGLGTVGKPIRLLANHFQVQIPKIDVYHYDVDIKPEKRPRRVNREVVDTMVRHFKMQIFGDRQPGYDGKRNMYTAHPLPIGRDRIDMEVTLPGEGKDQTFKVSVQWVSVVSLQLLLEALAGHLNEVPDDSVQALDVITRHLPSMRYTPVGRSFFSPPEGYYHPLGGGREVWFGFHQSVRPAMWNMMLNIDVSATAFYRAQPIIEFMCEVLDIQNINEQTKPLTDSQRVKFTKEIRGLKVEVTHCGQMKRKYRVCNVTRRPASHQTFPLQLENGQAMECTVAQYFKQKYSLQLKHPHLPCLQVGQEQKHTYLPLEVCNIVAGQRCIKKLTDNQTSTMIKATARSAPDRQEEISRLVKSNSMVGGPDPYLKEFGIVVHNEMTELTGRVLPAPMLQYGGRNKTVATPSQGVWDMRGKQFYAGIEIKVWAVACFAPQKQCREDLLKSFTDQLRKISKDAGMPIQGQPCFCKYAQGADSVEPMFKHLKMTYVGLQLIVVILPGKTPVYAEVKRVGDTLLGMATQCVQVKNVVKTSPQTLSNLCLKMNAKLGGINNVLVPHQRPSVFQQPVIFLGADVTHPPAGDGKKPSIAAVVGSMDGHPSRYCATVRVQTSRQEITQELLYSQEVVQDLTSMARELLIQFYKSTRFKPTRIIYYRGGVSEGQMKQVAWPELIAIRKACISLEEDYRPGITYIVVQKRHHTRLFCADKMERVGKSGNVPAGTTVDSTVTHPSEFDFYLCSHAGIQGTSRPSHYQVLWDDNCFTADELQLLTYQLCHTYVRCTRSVSIPAPAYYARLVAFRARYHLVDKDHDSAEGSHVSGQSNGRDPQALAKAVQIHHDTQHTMYFA</sequence>
<reference key="1">
    <citation type="journal article" date="2003" name="Curr. Biol.">
        <title>Short-interfering-RNA-mediated gene silencing in mammalian cells requires Dicer and eIF2C translation initiation factors.</title>
        <authorList>
            <person name="Doi N."/>
            <person name="Zenno S."/>
            <person name="Ueda R."/>
            <person name="Ohki-Hamazaki H."/>
            <person name="Ui-Tei K."/>
            <person name="Saigo K."/>
        </authorList>
    </citation>
    <scope>NUCLEOTIDE SEQUENCE [MRNA] (ISOFORM 1)</scope>
</reference>
<reference key="2">
    <citation type="journal article" date="2005" name="Science">
        <title>The transcriptional landscape of the mammalian genome.</title>
        <authorList>
            <person name="Carninci P."/>
            <person name="Kasukawa T."/>
            <person name="Katayama S."/>
            <person name="Gough J."/>
            <person name="Frith M.C."/>
            <person name="Maeda N."/>
            <person name="Oyama R."/>
            <person name="Ravasi T."/>
            <person name="Lenhard B."/>
            <person name="Wells C."/>
            <person name="Kodzius R."/>
            <person name="Shimokawa K."/>
            <person name="Bajic V.B."/>
            <person name="Brenner S.E."/>
            <person name="Batalov S."/>
            <person name="Forrest A.R."/>
            <person name="Zavolan M."/>
            <person name="Davis M.J."/>
            <person name="Wilming L.G."/>
            <person name="Aidinis V."/>
            <person name="Allen J.E."/>
            <person name="Ambesi-Impiombato A."/>
            <person name="Apweiler R."/>
            <person name="Aturaliya R.N."/>
            <person name="Bailey T.L."/>
            <person name="Bansal M."/>
            <person name="Baxter L."/>
            <person name="Beisel K.W."/>
            <person name="Bersano T."/>
            <person name="Bono H."/>
            <person name="Chalk A.M."/>
            <person name="Chiu K.P."/>
            <person name="Choudhary V."/>
            <person name="Christoffels A."/>
            <person name="Clutterbuck D.R."/>
            <person name="Crowe M.L."/>
            <person name="Dalla E."/>
            <person name="Dalrymple B.P."/>
            <person name="de Bono B."/>
            <person name="Della Gatta G."/>
            <person name="di Bernardo D."/>
            <person name="Down T."/>
            <person name="Engstrom P."/>
            <person name="Fagiolini M."/>
            <person name="Faulkner G."/>
            <person name="Fletcher C.F."/>
            <person name="Fukushima T."/>
            <person name="Furuno M."/>
            <person name="Futaki S."/>
            <person name="Gariboldi M."/>
            <person name="Georgii-Hemming P."/>
            <person name="Gingeras T.R."/>
            <person name="Gojobori T."/>
            <person name="Green R.E."/>
            <person name="Gustincich S."/>
            <person name="Harbers M."/>
            <person name="Hayashi Y."/>
            <person name="Hensch T.K."/>
            <person name="Hirokawa N."/>
            <person name="Hill D."/>
            <person name="Huminiecki L."/>
            <person name="Iacono M."/>
            <person name="Ikeo K."/>
            <person name="Iwama A."/>
            <person name="Ishikawa T."/>
            <person name="Jakt M."/>
            <person name="Kanapin A."/>
            <person name="Katoh M."/>
            <person name="Kawasawa Y."/>
            <person name="Kelso J."/>
            <person name="Kitamura H."/>
            <person name="Kitano H."/>
            <person name="Kollias G."/>
            <person name="Krishnan S.P."/>
            <person name="Kruger A."/>
            <person name="Kummerfeld S.K."/>
            <person name="Kurochkin I.V."/>
            <person name="Lareau L.F."/>
            <person name="Lazarevic D."/>
            <person name="Lipovich L."/>
            <person name="Liu J."/>
            <person name="Liuni S."/>
            <person name="McWilliam S."/>
            <person name="Madan Babu M."/>
            <person name="Madera M."/>
            <person name="Marchionni L."/>
            <person name="Matsuda H."/>
            <person name="Matsuzawa S."/>
            <person name="Miki H."/>
            <person name="Mignone F."/>
            <person name="Miyake S."/>
            <person name="Morris K."/>
            <person name="Mottagui-Tabar S."/>
            <person name="Mulder N."/>
            <person name="Nakano N."/>
            <person name="Nakauchi H."/>
            <person name="Ng P."/>
            <person name="Nilsson R."/>
            <person name="Nishiguchi S."/>
            <person name="Nishikawa S."/>
            <person name="Nori F."/>
            <person name="Ohara O."/>
            <person name="Okazaki Y."/>
            <person name="Orlando V."/>
            <person name="Pang K.C."/>
            <person name="Pavan W.J."/>
            <person name="Pavesi G."/>
            <person name="Pesole G."/>
            <person name="Petrovsky N."/>
            <person name="Piazza S."/>
            <person name="Reed J."/>
            <person name="Reid J.F."/>
            <person name="Ring B.Z."/>
            <person name="Ringwald M."/>
            <person name="Rost B."/>
            <person name="Ruan Y."/>
            <person name="Salzberg S.L."/>
            <person name="Sandelin A."/>
            <person name="Schneider C."/>
            <person name="Schoenbach C."/>
            <person name="Sekiguchi K."/>
            <person name="Semple C.A."/>
            <person name="Seno S."/>
            <person name="Sessa L."/>
            <person name="Sheng Y."/>
            <person name="Shibata Y."/>
            <person name="Shimada H."/>
            <person name="Shimada K."/>
            <person name="Silva D."/>
            <person name="Sinclair B."/>
            <person name="Sperling S."/>
            <person name="Stupka E."/>
            <person name="Sugiura K."/>
            <person name="Sultana R."/>
            <person name="Takenaka Y."/>
            <person name="Taki K."/>
            <person name="Tammoja K."/>
            <person name="Tan S.L."/>
            <person name="Tang S."/>
            <person name="Taylor M.S."/>
            <person name="Tegner J."/>
            <person name="Teichmann S.A."/>
            <person name="Ueda H.R."/>
            <person name="van Nimwegen E."/>
            <person name="Verardo R."/>
            <person name="Wei C.L."/>
            <person name="Yagi K."/>
            <person name="Yamanishi H."/>
            <person name="Zabarovsky E."/>
            <person name="Zhu S."/>
            <person name="Zimmer A."/>
            <person name="Hide W."/>
            <person name="Bult C."/>
            <person name="Grimmond S.M."/>
            <person name="Teasdale R.D."/>
            <person name="Liu E.T."/>
            <person name="Brusic V."/>
            <person name="Quackenbush J."/>
            <person name="Wahlestedt C."/>
            <person name="Mattick J.S."/>
            <person name="Hume D.A."/>
            <person name="Kai C."/>
            <person name="Sasaki D."/>
            <person name="Tomaru Y."/>
            <person name="Fukuda S."/>
            <person name="Kanamori-Katayama M."/>
            <person name="Suzuki M."/>
            <person name="Aoki J."/>
            <person name="Arakawa T."/>
            <person name="Iida J."/>
            <person name="Imamura K."/>
            <person name="Itoh M."/>
            <person name="Kato T."/>
            <person name="Kawaji H."/>
            <person name="Kawagashira N."/>
            <person name="Kawashima T."/>
            <person name="Kojima M."/>
            <person name="Kondo S."/>
            <person name="Konno H."/>
            <person name="Nakano K."/>
            <person name="Ninomiya N."/>
            <person name="Nishio T."/>
            <person name="Okada M."/>
            <person name="Plessy C."/>
            <person name="Shibata K."/>
            <person name="Shiraki T."/>
            <person name="Suzuki S."/>
            <person name="Tagami M."/>
            <person name="Waki K."/>
            <person name="Watahiki A."/>
            <person name="Okamura-Oho Y."/>
            <person name="Suzuki H."/>
            <person name="Kawai J."/>
            <person name="Hayashizaki Y."/>
        </authorList>
    </citation>
    <scope>NUCLEOTIDE SEQUENCE [LARGE SCALE MRNA] (ISOFORM 1)</scope>
    <source>
        <strain>C57BL/6J</strain>
        <tissue>Testis</tissue>
    </source>
</reference>
<reference key="3">
    <citation type="journal article" date="2009" name="PLoS Biol.">
        <title>Lineage-specific biology revealed by a finished genome assembly of the mouse.</title>
        <authorList>
            <person name="Church D.M."/>
            <person name="Goodstadt L."/>
            <person name="Hillier L.W."/>
            <person name="Zody M.C."/>
            <person name="Goldstein S."/>
            <person name="She X."/>
            <person name="Bult C.J."/>
            <person name="Agarwala R."/>
            <person name="Cherry J.L."/>
            <person name="DiCuccio M."/>
            <person name="Hlavina W."/>
            <person name="Kapustin Y."/>
            <person name="Meric P."/>
            <person name="Maglott D."/>
            <person name="Birtle Z."/>
            <person name="Marques A.C."/>
            <person name="Graves T."/>
            <person name="Zhou S."/>
            <person name="Teague B."/>
            <person name="Potamousis K."/>
            <person name="Churas C."/>
            <person name="Place M."/>
            <person name="Herschleb J."/>
            <person name="Runnheim R."/>
            <person name="Forrest D."/>
            <person name="Amos-Landgraf J."/>
            <person name="Schwartz D.C."/>
            <person name="Cheng Z."/>
            <person name="Lindblad-Toh K."/>
            <person name="Eichler E.E."/>
            <person name="Ponting C.P."/>
        </authorList>
    </citation>
    <scope>NUCLEOTIDE SEQUENCE [LARGE SCALE GENOMIC DNA]</scope>
    <source>
        <strain>C57BL/6J</strain>
    </source>
</reference>
<reference key="4">
    <citation type="journal article" date="2004" name="Genome Res.">
        <title>The status, quality, and expansion of the NIH full-length cDNA project: the Mammalian Gene Collection (MGC).</title>
        <authorList>
            <consortium name="The MGC Project Team"/>
        </authorList>
    </citation>
    <scope>NUCLEOTIDE SEQUENCE [LARGE SCALE MRNA] (ISOFORM 1)</scope>
    <source>
        <strain>C57BL/6J</strain>
        <tissue>Eye</tissue>
    </source>
</reference>
<reference key="5">
    <citation type="journal article" date="2003" name="DNA Res.">
        <title>Prediction of the coding sequences of mouse homologues of KIAA gene: III. The complete nucleotide sequences of 500 mouse KIAA-homologous cDNAs identified by screening of terminal sequences of cDNA clones randomly sampled from size-fractionated libraries.</title>
        <authorList>
            <person name="Okazaki N."/>
            <person name="Kikuno R."/>
            <person name="Ohara R."/>
            <person name="Inamoto S."/>
            <person name="Koseki H."/>
            <person name="Hiraoka S."/>
            <person name="Saga Y."/>
            <person name="Nagase T."/>
            <person name="Ohara O."/>
            <person name="Koga H."/>
        </authorList>
    </citation>
    <scope>NUCLEOTIDE SEQUENCE [LARGE SCALE MRNA] OF 144-861 (ISOFORM 2)</scope>
    <source>
        <tissue>Pancreatic islet</tissue>
    </source>
</reference>
<reference key="6">
    <citation type="journal article" date="2009" name="Genes Dev.">
        <title>Essential and overlapping functions for mammalian Argonautes in microRNA silencing.</title>
        <authorList>
            <person name="Su H."/>
            <person name="Trombly M.I."/>
            <person name="Chen J."/>
            <person name="Wang X."/>
        </authorList>
    </citation>
    <scope>FUNCTION</scope>
</reference>
<feature type="chain" id="PRO_0000194064" description="Protein argonaute-4">
    <location>
        <begin position="1"/>
        <end position="861"/>
    </location>
</feature>
<feature type="domain" description="PAZ" evidence="3">
    <location>
        <begin position="219"/>
        <end position="338"/>
    </location>
</feature>
<feature type="domain" description="Piwi" evidence="2">
    <location>
        <begin position="509"/>
        <end position="820"/>
    </location>
</feature>
<feature type="region of interest" description="Disordered" evidence="4">
    <location>
        <begin position="825"/>
        <end position="846"/>
    </location>
</feature>
<feature type="splice variant" id="VSP_036487" description="In isoform 2." evidence="6">
    <location>
        <begin position="399"/>
        <end position="460"/>
    </location>
</feature>
<feature type="sequence conflict" description="In Ref. 1; BAC15769." evidence="7" ref="1">
    <original>V</original>
    <variation>A</variation>
    <location>
        <position position="128"/>
    </location>
</feature>
<feature type="sequence conflict" description="In Ref. 1; BAC15769." evidence="7" ref="1">
    <original>V</original>
    <variation>I</variation>
    <location>
        <position position="541"/>
    </location>
</feature>
<feature type="sequence conflict" description="In Ref. 1; BAC15769." evidence="7" ref="1">
    <original>L</original>
    <variation>P</variation>
    <location>
        <position position="570"/>
    </location>
</feature>
<feature type="sequence conflict" description="In Ref. 1; BAC15769." evidence="7" ref="1">
    <original>R</original>
    <variation>W</variation>
    <location>
        <position position="622"/>
    </location>
</feature>
<feature type="sequence conflict" description="In Ref. 1; BAC15769." evidence="7" ref="1">
    <original>T</original>
    <variation>A</variation>
    <location>
        <position position="631"/>
    </location>
</feature>
<feature type="sequence conflict" description="In Ref. 5; BAC98205." evidence="7" ref="5">
    <original>R</original>
    <variation>W</variation>
    <location>
        <position position="649"/>
    </location>
</feature>
<gene>
    <name type="primary">Ago4</name>
    <name type="synonym">Eif2c4</name>
    <name type="synonym">Kiaa1567</name>
</gene>
<organism>
    <name type="scientific">Mus musculus</name>
    <name type="common">Mouse</name>
    <dbReference type="NCBI Taxonomy" id="10090"/>
    <lineage>
        <taxon>Eukaryota</taxon>
        <taxon>Metazoa</taxon>
        <taxon>Chordata</taxon>
        <taxon>Craniata</taxon>
        <taxon>Vertebrata</taxon>
        <taxon>Euteleostomi</taxon>
        <taxon>Mammalia</taxon>
        <taxon>Eutheria</taxon>
        <taxon>Euarchontoglires</taxon>
        <taxon>Glires</taxon>
        <taxon>Rodentia</taxon>
        <taxon>Myomorpha</taxon>
        <taxon>Muroidea</taxon>
        <taxon>Muridae</taxon>
        <taxon>Murinae</taxon>
        <taxon>Mus</taxon>
        <taxon>Mus</taxon>
    </lineage>
</organism>
<comment type="function">
    <text evidence="2 5">Required for RNA-mediated gene silencing (RNAi). Binds to short RNAs such as microRNAs (miRNAs) and represses the translation of mRNAs which are complementary to them. Lacks endonuclease activity and does not appear to cleave target mRNAs.</text>
</comment>
<comment type="subunit">
    <text evidence="2">Interacts with EIF4B, IMP8, PRMT5, TNRC6A and TNRC6B. Interacts with ZFP36.</text>
</comment>
<comment type="subcellular location">
    <subcellularLocation>
        <location evidence="2">Cytoplasm</location>
        <location evidence="2">P-body</location>
    </subcellularLocation>
</comment>
<comment type="alternative products">
    <event type="alternative splicing"/>
    <isoform>
        <id>Q8CJF8-1</id>
        <name>1</name>
        <sequence type="displayed"/>
    </isoform>
    <isoform>
        <id>Q8CJF8-2</id>
        <name>2</name>
        <sequence type="described" ref="VSP_036487"/>
    </isoform>
</comment>
<comment type="PTM">
    <text evidence="1">Ubiquitinated on surface-exposed lysines by a SCF-like E3 ubiquitin-protein ligase complex containing ZSWIM8 during target-directed microRNA degradation (TDMD), a process that mediates degradation of microRNAs (miRNAs). Ubiquitination by the SCF-like E3 ubiquitin-protein ligase complex containing ZSWIM8 leads to its subsequent degradation, thereby exposing miRNAs for degradation. ZSWIM8 recognizes and binds AGO4 when it is engaged with a TDMD target.</text>
</comment>
<comment type="similarity">
    <text evidence="2">Belongs to the argonaute family. Ago subfamily.</text>
</comment>
<comment type="sequence caution" evidence="7">
    <conflict type="erroneous initiation">
        <sequence resource="EMBL-CDS" id="BAC26738"/>
    </conflict>
</comment>
<comment type="sequence caution" evidence="7">
    <conflict type="miscellaneous discrepancy">
        <sequence resource="EMBL-CDS" id="BAC98205"/>
    </conflict>
    <text>Intron retention.</text>
</comment>
<protein>
    <recommendedName>
        <fullName evidence="2">Protein argonaute-4</fullName>
        <shortName evidence="2">Argonaute4</shortName>
        <shortName>mAgo4</shortName>
    </recommendedName>
    <alternativeName>
        <fullName>Argonaute RISC catalytic component 4</fullName>
    </alternativeName>
    <alternativeName>
        <fullName evidence="2">Eukaryotic translation initiation factor 2C 4</fullName>
        <shortName evidence="2">eIF-2C 4</shortName>
        <shortName evidence="2">eIF2C 4</shortName>
    </alternativeName>
    <alternativeName>
        <fullName>Piwi/argonaute family protein meIF2C4</fullName>
    </alternativeName>
</protein>
<proteinExistence type="evidence at transcript level"/>
<keyword id="KW-0025">Alternative splicing</keyword>
<keyword id="KW-0963">Cytoplasm</keyword>
<keyword id="KW-1185">Reference proteome</keyword>
<keyword id="KW-0687">Ribonucleoprotein</keyword>
<keyword id="KW-0694">RNA-binding</keyword>
<keyword id="KW-0943">RNA-mediated gene silencing</keyword>
<keyword id="KW-0810">Translation regulation</keyword>
<keyword id="KW-0832">Ubl conjugation</keyword>
<dbReference type="EMBL" id="AB081474">
    <property type="protein sequence ID" value="BAC15769.1"/>
    <property type="molecule type" value="mRNA"/>
</dbReference>
<dbReference type="EMBL" id="AK030018">
    <property type="protein sequence ID" value="BAC26738.1"/>
    <property type="status" value="ALT_INIT"/>
    <property type="molecule type" value="mRNA"/>
</dbReference>
<dbReference type="EMBL" id="AL606935">
    <property type="status" value="NOT_ANNOTATED_CDS"/>
    <property type="molecule type" value="Genomic_DNA"/>
</dbReference>
<dbReference type="EMBL" id="BC096023">
    <property type="protein sequence ID" value="AAH96023.1"/>
    <property type="molecule type" value="mRNA"/>
</dbReference>
<dbReference type="EMBL" id="AK129395">
    <property type="protein sequence ID" value="BAC98205.2"/>
    <property type="status" value="ALT_SEQ"/>
    <property type="molecule type" value="Transcribed_RNA"/>
</dbReference>
<dbReference type="CCDS" id="CCDS18654.1">
    <molecule id="Q8CJF8-1"/>
</dbReference>
<dbReference type="RefSeq" id="NP_694817.2">
    <molecule id="Q8CJF8-1"/>
    <property type="nucleotide sequence ID" value="NM_153177.3"/>
</dbReference>
<dbReference type="SMR" id="Q8CJF8"/>
<dbReference type="BioGRID" id="218348">
    <property type="interactions" value="5"/>
</dbReference>
<dbReference type="FunCoup" id="Q8CJF8">
    <property type="interactions" value="2162"/>
</dbReference>
<dbReference type="STRING" id="10090.ENSMUSP00000081312"/>
<dbReference type="GlyGen" id="Q8CJF8">
    <property type="glycosylation" value="1 site, 1 O-linked glycan (1 site)"/>
</dbReference>
<dbReference type="iPTMnet" id="Q8CJF8"/>
<dbReference type="PhosphoSitePlus" id="Q8CJF8"/>
<dbReference type="PaxDb" id="10090-ENSMUSP00000081312"/>
<dbReference type="PeptideAtlas" id="Q8CJF8"/>
<dbReference type="ProteomicsDB" id="285567">
    <molecule id="Q8CJF8-1"/>
</dbReference>
<dbReference type="ProteomicsDB" id="285568">
    <molecule id="Q8CJF8-2"/>
</dbReference>
<dbReference type="Antibodypedia" id="31591">
    <property type="antibodies" value="164 antibodies from 28 providers"/>
</dbReference>
<dbReference type="DNASU" id="76850"/>
<dbReference type="Ensembl" id="ENSMUST00000084289.5">
    <molecule id="Q8CJF8-1"/>
    <property type="protein sequence ID" value="ENSMUSP00000081312.5"/>
    <property type="gene ID" value="ENSMUSG00000042500.12"/>
</dbReference>
<dbReference type="GeneID" id="76850"/>
<dbReference type="KEGG" id="mmu:76850"/>
<dbReference type="UCSC" id="uc008utk.2">
    <molecule id="Q8CJF8-1"/>
    <property type="organism name" value="mouse"/>
</dbReference>
<dbReference type="AGR" id="MGI:1924100"/>
<dbReference type="CTD" id="192670"/>
<dbReference type="MGI" id="MGI:1924100">
    <property type="gene designation" value="Ago4"/>
</dbReference>
<dbReference type="VEuPathDB" id="HostDB:ENSMUSG00000042500"/>
<dbReference type="eggNOG" id="KOG1041">
    <property type="taxonomic scope" value="Eukaryota"/>
</dbReference>
<dbReference type="GeneTree" id="ENSGT00940000158729"/>
<dbReference type="HOGENOM" id="CLU_004544_0_0_1"/>
<dbReference type="InParanoid" id="Q8CJF8"/>
<dbReference type="OMA" id="RVRITHI"/>
<dbReference type="OrthoDB" id="10252740at2759"/>
<dbReference type="PhylomeDB" id="Q8CJF8"/>
<dbReference type="TreeFam" id="TF101510"/>
<dbReference type="Reactome" id="R-MMU-203927">
    <property type="pathway name" value="MicroRNA (miRNA) biogenesis"/>
</dbReference>
<dbReference type="Reactome" id="R-MMU-426486">
    <property type="pathway name" value="Small interfering RNA (siRNA) biogenesis"/>
</dbReference>
<dbReference type="Reactome" id="R-MMU-426496">
    <property type="pathway name" value="Post-transcriptional silencing by small RNAs"/>
</dbReference>
<dbReference type="BioGRID-ORCS" id="76850">
    <property type="hits" value="2 hits in 76 CRISPR screens"/>
</dbReference>
<dbReference type="ChiTaRS" id="Ago4">
    <property type="organism name" value="mouse"/>
</dbReference>
<dbReference type="PRO" id="PR:Q8CJF8"/>
<dbReference type="Proteomes" id="UP000000589">
    <property type="component" value="Chromosome 4"/>
</dbReference>
<dbReference type="RNAct" id="Q8CJF8">
    <property type="molecule type" value="protein"/>
</dbReference>
<dbReference type="Bgee" id="ENSMUSG00000042500">
    <property type="expression patterns" value="Expressed in skin of external ear and 216 other cell types or tissues"/>
</dbReference>
<dbReference type="GO" id="GO:0005829">
    <property type="term" value="C:cytosol"/>
    <property type="evidence" value="ECO:0007669"/>
    <property type="project" value="Ensembl"/>
</dbReference>
<dbReference type="GO" id="GO:0005634">
    <property type="term" value="C:nucleus"/>
    <property type="evidence" value="ECO:0000314"/>
    <property type="project" value="MGI"/>
</dbReference>
<dbReference type="GO" id="GO:0000932">
    <property type="term" value="C:P-body"/>
    <property type="evidence" value="ECO:0000314"/>
    <property type="project" value="MGI"/>
</dbReference>
<dbReference type="GO" id="GO:0016442">
    <property type="term" value="C:RISC complex"/>
    <property type="evidence" value="ECO:0000314"/>
    <property type="project" value="MGI"/>
</dbReference>
<dbReference type="GO" id="GO:0070578">
    <property type="term" value="C:RISC-loading complex"/>
    <property type="evidence" value="ECO:0007669"/>
    <property type="project" value="Ensembl"/>
</dbReference>
<dbReference type="GO" id="GO:0003725">
    <property type="term" value="F:double-stranded RNA binding"/>
    <property type="evidence" value="ECO:0007669"/>
    <property type="project" value="Ensembl"/>
</dbReference>
<dbReference type="GO" id="GO:0035198">
    <property type="term" value="F:miRNA binding"/>
    <property type="evidence" value="ECO:0007669"/>
    <property type="project" value="UniProtKB-UniRule"/>
</dbReference>
<dbReference type="GO" id="GO:0003723">
    <property type="term" value="F:RNA binding"/>
    <property type="evidence" value="ECO:0000314"/>
    <property type="project" value="MGI"/>
</dbReference>
<dbReference type="GO" id="GO:0003727">
    <property type="term" value="F:single-stranded RNA binding"/>
    <property type="evidence" value="ECO:0007669"/>
    <property type="project" value="Ensembl"/>
</dbReference>
<dbReference type="GO" id="GO:0008584">
    <property type="term" value="P:male gonad development"/>
    <property type="evidence" value="ECO:0000315"/>
    <property type="project" value="MGI"/>
</dbReference>
<dbReference type="GO" id="GO:0007140">
    <property type="term" value="P:male meiotic nuclear division"/>
    <property type="evidence" value="ECO:0000315"/>
    <property type="project" value="MGI"/>
</dbReference>
<dbReference type="GO" id="GO:0010586">
    <property type="term" value="P:miRNA metabolic process"/>
    <property type="evidence" value="ECO:0000315"/>
    <property type="project" value="MGI"/>
</dbReference>
<dbReference type="GO" id="GO:0035278">
    <property type="term" value="P:miRNA-mediated gene silencing by inhibition of translation"/>
    <property type="evidence" value="ECO:0000250"/>
    <property type="project" value="UniProtKB"/>
</dbReference>
<dbReference type="GO" id="GO:0006402">
    <property type="term" value="P:mRNA catabolic process"/>
    <property type="evidence" value="ECO:0000250"/>
    <property type="project" value="UniProtKB"/>
</dbReference>
<dbReference type="GO" id="GO:0043066">
    <property type="term" value="P:negative regulation of apoptotic process"/>
    <property type="evidence" value="ECO:0000315"/>
    <property type="project" value="MGI"/>
</dbReference>
<dbReference type="GO" id="GO:0031054">
    <property type="term" value="P:pre-miRNA processing"/>
    <property type="evidence" value="ECO:0007669"/>
    <property type="project" value="Ensembl"/>
</dbReference>
<dbReference type="GO" id="GO:0022604">
    <property type="term" value="P:regulation of cell morphogenesis"/>
    <property type="evidence" value="ECO:0000315"/>
    <property type="project" value="MGI"/>
</dbReference>
<dbReference type="GO" id="GO:0070922">
    <property type="term" value="P:RISC complex assembly"/>
    <property type="evidence" value="ECO:0007669"/>
    <property type="project" value="Ensembl"/>
</dbReference>
<dbReference type="GO" id="GO:0007130">
    <property type="term" value="P:synaptonemal complex assembly"/>
    <property type="evidence" value="ECO:0000315"/>
    <property type="project" value="MGI"/>
</dbReference>
<dbReference type="CDD" id="cd02846">
    <property type="entry name" value="PAZ_argonaute_like"/>
    <property type="match status" value="1"/>
</dbReference>
<dbReference type="CDD" id="cd04657">
    <property type="entry name" value="Piwi_ago-like"/>
    <property type="match status" value="1"/>
</dbReference>
<dbReference type="FunFam" id="2.170.260.10:FF:000001">
    <property type="entry name" value="Protein argonaute-2"/>
    <property type="match status" value="1"/>
</dbReference>
<dbReference type="FunFam" id="3.30.420.10:FF:000001">
    <property type="entry name" value="Protein argonaute-2"/>
    <property type="match status" value="1"/>
</dbReference>
<dbReference type="FunFam" id="3.40.50.2300:FF:000005">
    <property type="entry name" value="Protein argonaute-2"/>
    <property type="match status" value="1"/>
</dbReference>
<dbReference type="Gene3D" id="3.40.50.2300">
    <property type="match status" value="1"/>
</dbReference>
<dbReference type="Gene3D" id="2.170.260.10">
    <property type="entry name" value="paz domain"/>
    <property type="match status" value="1"/>
</dbReference>
<dbReference type="Gene3D" id="3.30.420.10">
    <property type="entry name" value="Ribonuclease H-like superfamily/Ribonuclease H"/>
    <property type="match status" value="1"/>
</dbReference>
<dbReference type="HAMAP" id="MF_03033">
    <property type="entry name" value="AGO4"/>
    <property type="match status" value="1"/>
</dbReference>
<dbReference type="InterPro" id="IPR028604">
    <property type="entry name" value="AGO4"/>
</dbReference>
<dbReference type="InterPro" id="IPR014811">
    <property type="entry name" value="ArgoL1"/>
</dbReference>
<dbReference type="InterPro" id="IPR032472">
    <property type="entry name" value="ArgoL2"/>
</dbReference>
<dbReference type="InterPro" id="IPR032473">
    <property type="entry name" value="Argonaute_Mid_dom"/>
</dbReference>
<dbReference type="InterPro" id="IPR032474">
    <property type="entry name" value="Argonaute_N"/>
</dbReference>
<dbReference type="InterPro" id="IPR003100">
    <property type="entry name" value="PAZ_dom"/>
</dbReference>
<dbReference type="InterPro" id="IPR036085">
    <property type="entry name" value="PAZ_dom_sf"/>
</dbReference>
<dbReference type="InterPro" id="IPR003165">
    <property type="entry name" value="Piwi"/>
</dbReference>
<dbReference type="InterPro" id="IPR045246">
    <property type="entry name" value="Piwi_ago-like"/>
</dbReference>
<dbReference type="InterPro" id="IPR012337">
    <property type="entry name" value="RNaseH-like_sf"/>
</dbReference>
<dbReference type="InterPro" id="IPR036397">
    <property type="entry name" value="RNaseH_sf"/>
</dbReference>
<dbReference type="PANTHER" id="PTHR22891">
    <property type="entry name" value="EUKARYOTIC TRANSLATION INITIATION FACTOR 2C"/>
    <property type="match status" value="1"/>
</dbReference>
<dbReference type="Pfam" id="PF08699">
    <property type="entry name" value="ArgoL1"/>
    <property type="match status" value="1"/>
</dbReference>
<dbReference type="Pfam" id="PF16488">
    <property type="entry name" value="ArgoL2"/>
    <property type="match status" value="1"/>
</dbReference>
<dbReference type="Pfam" id="PF16487">
    <property type="entry name" value="ArgoMid"/>
    <property type="match status" value="1"/>
</dbReference>
<dbReference type="Pfam" id="PF16486">
    <property type="entry name" value="ArgoN"/>
    <property type="match status" value="1"/>
</dbReference>
<dbReference type="Pfam" id="PF02170">
    <property type="entry name" value="PAZ"/>
    <property type="match status" value="1"/>
</dbReference>
<dbReference type="Pfam" id="PF02171">
    <property type="entry name" value="Piwi"/>
    <property type="match status" value="1"/>
</dbReference>
<dbReference type="SMART" id="SM01163">
    <property type="entry name" value="DUF1785"/>
    <property type="match status" value="1"/>
</dbReference>
<dbReference type="SMART" id="SM00949">
    <property type="entry name" value="PAZ"/>
    <property type="match status" value="1"/>
</dbReference>
<dbReference type="SMART" id="SM00950">
    <property type="entry name" value="Piwi"/>
    <property type="match status" value="1"/>
</dbReference>
<dbReference type="SUPFAM" id="SSF101690">
    <property type="entry name" value="PAZ domain"/>
    <property type="match status" value="1"/>
</dbReference>
<dbReference type="SUPFAM" id="SSF53098">
    <property type="entry name" value="Ribonuclease H-like"/>
    <property type="match status" value="1"/>
</dbReference>
<dbReference type="PROSITE" id="PS50821">
    <property type="entry name" value="PAZ"/>
    <property type="match status" value="1"/>
</dbReference>
<dbReference type="PROSITE" id="PS50822">
    <property type="entry name" value="PIWI"/>
    <property type="match status" value="1"/>
</dbReference>
<accession>Q8CJF8</accession>
<accession>Q4VBD7</accession>
<accession>Q6ZPM6</accession>
<accession>Q8BTF4</accession>
<evidence type="ECO:0000250" key="1">
    <source>
        <dbReference type="UniProtKB" id="Q9UKV8"/>
    </source>
</evidence>
<evidence type="ECO:0000255" key="2">
    <source>
        <dbReference type="HAMAP-Rule" id="MF_03033"/>
    </source>
</evidence>
<evidence type="ECO:0000255" key="3">
    <source>
        <dbReference type="PROSITE-ProRule" id="PRU00142"/>
    </source>
</evidence>
<evidence type="ECO:0000256" key="4">
    <source>
        <dbReference type="SAM" id="MobiDB-lite"/>
    </source>
</evidence>
<evidence type="ECO:0000269" key="5">
    <source>
    </source>
</evidence>
<evidence type="ECO:0000303" key="6">
    <source>
    </source>
</evidence>
<evidence type="ECO:0000305" key="7"/>